<sequence length="306" mass="34583">MEVTFFGTSAGLPTKERNTQAIALNLEPYSNSIWLFDVGEGTQHQILHHAIKLGKVTHIFITHMHGDHIFGLPGLLSSRSFQGGEQKPLTLVGPKGIKAYVEMSMNLSESHLNYPITYIEIDDHLTYHHDGFTVEAHLLNHGIPSYGYRVMAPETTGTINVEALKNIGLEPGPKYQEVKSHDTFEHNGQVYQSKDFRGESKQGPVVAIFGDTKPCSNERVISRDADVMVHEATYIDGEKHLANNYHHSHIEDVFALIKEANVKRTLITHLSNRYNTEDINEIYQILIQNEDTPNFNFVKDFDSFKV</sequence>
<dbReference type="EC" id="3.1.26.11" evidence="1"/>
<dbReference type="EMBL" id="AP009324">
    <property type="protein sequence ID" value="BAF78375.1"/>
    <property type="molecule type" value="Genomic_DNA"/>
</dbReference>
<dbReference type="RefSeq" id="WP_000454063.1">
    <property type="nucleotide sequence ID" value="NC_009782.1"/>
</dbReference>
<dbReference type="SMR" id="A7X2M2"/>
<dbReference type="KEGG" id="saw:SAHV_1492"/>
<dbReference type="HOGENOM" id="CLU_031317_2_0_9"/>
<dbReference type="GO" id="GO:0042781">
    <property type="term" value="F:3'-tRNA processing endoribonuclease activity"/>
    <property type="evidence" value="ECO:0007669"/>
    <property type="project" value="UniProtKB-UniRule"/>
</dbReference>
<dbReference type="GO" id="GO:0008270">
    <property type="term" value="F:zinc ion binding"/>
    <property type="evidence" value="ECO:0007669"/>
    <property type="project" value="UniProtKB-UniRule"/>
</dbReference>
<dbReference type="CDD" id="cd07717">
    <property type="entry name" value="RNaseZ_ZiPD-like_MBL-fold"/>
    <property type="match status" value="1"/>
</dbReference>
<dbReference type="FunFam" id="3.60.15.10:FF:000002">
    <property type="entry name" value="Ribonuclease Z"/>
    <property type="match status" value="1"/>
</dbReference>
<dbReference type="Gene3D" id="3.60.15.10">
    <property type="entry name" value="Ribonuclease Z/Hydroxyacylglutathione hydrolase-like"/>
    <property type="match status" value="1"/>
</dbReference>
<dbReference type="HAMAP" id="MF_01818">
    <property type="entry name" value="RNase_Z_BN"/>
    <property type="match status" value="1"/>
</dbReference>
<dbReference type="InterPro" id="IPR036866">
    <property type="entry name" value="RibonucZ/Hydroxyglut_hydro"/>
</dbReference>
<dbReference type="InterPro" id="IPR013471">
    <property type="entry name" value="RNase_Z/BN"/>
</dbReference>
<dbReference type="InterPro" id="IPR027794">
    <property type="entry name" value="tRNase_Z_dom"/>
</dbReference>
<dbReference type="NCBIfam" id="NF000801">
    <property type="entry name" value="PRK00055.1-3"/>
    <property type="match status" value="1"/>
</dbReference>
<dbReference type="NCBIfam" id="TIGR02651">
    <property type="entry name" value="RNase_Z"/>
    <property type="match status" value="1"/>
</dbReference>
<dbReference type="PANTHER" id="PTHR46018">
    <property type="entry name" value="ZINC PHOSPHODIESTERASE ELAC PROTEIN 1"/>
    <property type="match status" value="1"/>
</dbReference>
<dbReference type="PANTHER" id="PTHR46018:SF2">
    <property type="entry name" value="ZINC PHOSPHODIESTERASE ELAC PROTEIN 1"/>
    <property type="match status" value="1"/>
</dbReference>
<dbReference type="Pfam" id="PF13691">
    <property type="entry name" value="Lactamase_B_4"/>
    <property type="match status" value="1"/>
</dbReference>
<dbReference type="SUPFAM" id="SSF56281">
    <property type="entry name" value="Metallo-hydrolase/oxidoreductase"/>
    <property type="match status" value="1"/>
</dbReference>
<accession>A7X2M2</accession>
<gene>
    <name evidence="1" type="primary">rnz</name>
    <name type="ordered locus">SAHV_1492</name>
</gene>
<feature type="chain" id="PRO_1000070327" description="Ribonuclease Z">
    <location>
        <begin position="1"/>
        <end position="306"/>
    </location>
</feature>
<feature type="active site" description="Proton acceptor" evidence="1">
    <location>
        <position position="67"/>
    </location>
</feature>
<feature type="binding site" evidence="1">
    <location>
        <position position="63"/>
    </location>
    <ligand>
        <name>Zn(2+)</name>
        <dbReference type="ChEBI" id="CHEBI:29105"/>
        <label>1</label>
        <note>catalytic</note>
    </ligand>
</feature>
<feature type="binding site" evidence="1">
    <location>
        <position position="65"/>
    </location>
    <ligand>
        <name>Zn(2+)</name>
        <dbReference type="ChEBI" id="CHEBI:29105"/>
        <label>1</label>
        <note>catalytic</note>
    </ligand>
</feature>
<feature type="binding site" evidence="1">
    <location>
        <position position="67"/>
    </location>
    <ligand>
        <name>Zn(2+)</name>
        <dbReference type="ChEBI" id="CHEBI:29105"/>
        <label>2</label>
        <note>catalytic</note>
    </ligand>
</feature>
<feature type="binding site" evidence="1">
    <location>
        <position position="68"/>
    </location>
    <ligand>
        <name>Zn(2+)</name>
        <dbReference type="ChEBI" id="CHEBI:29105"/>
        <label>2</label>
        <note>catalytic</note>
    </ligand>
</feature>
<feature type="binding site" evidence="1">
    <location>
        <position position="141"/>
    </location>
    <ligand>
        <name>Zn(2+)</name>
        <dbReference type="ChEBI" id="CHEBI:29105"/>
        <label>1</label>
        <note>catalytic</note>
    </ligand>
</feature>
<feature type="binding site" evidence="1">
    <location>
        <position position="211"/>
    </location>
    <ligand>
        <name>Zn(2+)</name>
        <dbReference type="ChEBI" id="CHEBI:29105"/>
        <label>1</label>
        <note>catalytic</note>
    </ligand>
</feature>
<feature type="binding site" evidence="1">
    <location>
        <position position="211"/>
    </location>
    <ligand>
        <name>Zn(2+)</name>
        <dbReference type="ChEBI" id="CHEBI:29105"/>
        <label>2</label>
        <note>catalytic</note>
    </ligand>
</feature>
<feature type="binding site" evidence="1">
    <location>
        <position position="269"/>
    </location>
    <ligand>
        <name>Zn(2+)</name>
        <dbReference type="ChEBI" id="CHEBI:29105"/>
        <label>2</label>
        <note>catalytic</note>
    </ligand>
</feature>
<evidence type="ECO:0000255" key="1">
    <source>
        <dbReference type="HAMAP-Rule" id="MF_01818"/>
    </source>
</evidence>
<comment type="function">
    <text evidence="1">Zinc phosphodiesterase, which displays some tRNA 3'-processing endonuclease activity. Probably involved in tRNA maturation, by removing a 3'-trailer from precursor tRNA.</text>
</comment>
<comment type="catalytic activity">
    <reaction evidence="1">
        <text>Endonucleolytic cleavage of RNA, removing extra 3' nucleotides from tRNA precursor, generating 3' termini of tRNAs. A 3'-hydroxy group is left at the tRNA terminus and a 5'-phosphoryl group is left at the trailer molecule.</text>
        <dbReference type="EC" id="3.1.26.11"/>
    </reaction>
</comment>
<comment type="cofactor">
    <cofactor evidence="1">
        <name>Zn(2+)</name>
        <dbReference type="ChEBI" id="CHEBI:29105"/>
    </cofactor>
    <text evidence="1">Binds 2 Zn(2+) ions.</text>
</comment>
<comment type="subunit">
    <text evidence="1">Homodimer.</text>
</comment>
<comment type="similarity">
    <text evidence="1">Belongs to the RNase Z family.</text>
</comment>
<keyword id="KW-0255">Endonuclease</keyword>
<keyword id="KW-0378">Hydrolase</keyword>
<keyword id="KW-0479">Metal-binding</keyword>
<keyword id="KW-0540">Nuclease</keyword>
<keyword id="KW-0819">tRNA processing</keyword>
<keyword id="KW-0862">Zinc</keyword>
<reference key="1">
    <citation type="journal article" date="2008" name="Antimicrob. Agents Chemother.">
        <title>Mutated response regulator graR is responsible for phenotypic conversion of Staphylococcus aureus from heterogeneous vancomycin-intermediate resistance to vancomycin-intermediate resistance.</title>
        <authorList>
            <person name="Neoh H.-M."/>
            <person name="Cui L."/>
            <person name="Yuzawa H."/>
            <person name="Takeuchi F."/>
            <person name="Matsuo M."/>
            <person name="Hiramatsu K."/>
        </authorList>
    </citation>
    <scope>NUCLEOTIDE SEQUENCE [LARGE SCALE GENOMIC DNA]</scope>
    <source>
        <strain>Mu3 / ATCC 700698</strain>
    </source>
</reference>
<name>RNZ_STAA1</name>
<protein>
    <recommendedName>
        <fullName evidence="1">Ribonuclease Z</fullName>
        <shortName evidence="1">RNase Z</shortName>
        <ecNumber evidence="1">3.1.26.11</ecNumber>
    </recommendedName>
    <alternativeName>
        <fullName evidence="1">tRNA 3 endonuclease</fullName>
    </alternativeName>
    <alternativeName>
        <fullName evidence="1">tRNase Z</fullName>
    </alternativeName>
</protein>
<proteinExistence type="inferred from homology"/>
<organism>
    <name type="scientific">Staphylococcus aureus (strain Mu3 / ATCC 700698)</name>
    <dbReference type="NCBI Taxonomy" id="418127"/>
    <lineage>
        <taxon>Bacteria</taxon>
        <taxon>Bacillati</taxon>
        <taxon>Bacillota</taxon>
        <taxon>Bacilli</taxon>
        <taxon>Bacillales</taxon>
        <taxon>Staphylococcaceae</taxon>
        <taxon>Staphylococcus</taxon>
    </lineage>
</organism>